<dbReference type="EMBL" id="CP000859">
    <property type="protein sequence ID" value="ABW68599.1"/>
    <property type="molecule type" value="Genomic_DNA"/>
</dbReference>
<dbReference type="RefSeq" id="WP_012176210.1">
    <property type="nucleotide sequence ID" value="NC_009943.1"/>
</dbReference>
<dbReference type="SMR" id="A8ZXX2"/>
<dbReference type="STRING" id="96561.Dole_2796"/>
<dbReference type="KEGG" id="dol:Dole_2796"/>
<dbReference type="eggNOG" id="COG2001">
    <property type="taxonomic scope" value="Bacteria"/>
</dbReference>
<dbReference type="HOGENOM" id="CLU_107907_0_0_7"/>
<dbReference type="OrthoDB" id="9807753at2"/>
<dbReference type="Proteomes" id="UP000008561">
    <property type="component" value="Chromosome"/>
</dbReference>
<dbReference type="GO" id="GO:0005737">
    <property type="term" value="C:cytoplasm"/>
    <property type="evidence" value="ECO:0007669"/>
    <property type="project" value="UniProtKB-UniRule"/>
</dbReference>
<dbReference type="GO" id="GO:0009295">
    <property type="term" value="C:nucleoid"/>
    <property type="evidence" value="ECO:0007669"/>
    <property type="project" value="UniProtKB-SubCell"/>
</dbReference>
<dbReference type="GO" id="GO:0003700">
    <property type="term" value="F:DNA-binding transcription factor activity"/>
    <property type="evidence" value="ECO:0007669"/>
    <property type="project" value="UniProtKB-UniRule"/>
</dbReference>
<dbReference type="GO" id="GO:0000976">
    <property type="term" value="F:transcription cis-regulatory region binding"/>
    <property type="evidence" value="ECO:0007669"/>
    <property type="project" value="TreeGrafter"/>
</dbReference>
<dbReference type="GO" id="GO:2000143">
    <property type="term" value="P:negative regulation of DNA-templated transcription initiation"/>
    <property type="evidence" value="ECO:0007669"/>
    <property type="project" value="TreeGrafter"/>
</dbReference>
<dbReference type="CDD" id="cd16321">
    <property type="entry name" value="MraZ_C"/>
    <property type="match status" value="1"/>
</dbReference>
<dbReference type="CDD" id="cd16320">
    <property type="entry name" value="MraZ_N"/>
    <property type="match status" value="1"/>
</dbReference>
<dbReference type="Gene3D" id="3.40.1550.20">
    <property type="entry name" value="Transcriptional regulator MraZ domain"/>
    <property type="match status" value="1"/>
</dbReference>
<dbReference type="HAMAP" id="MF_01008">
    <property type="entry name" value="MraZ"/>
    <property type="match status" value="1"/>
</dbReference>
<dbReference type="InterPro" id="IPR003444">
    <property type="entry name" value="MraZ"/>
</dbReference>
<dbReference type="InterPro" id="IPR035644">
    <property type="entry name" value="MraZ_C"/>
</dbReference>
<dbReference type="InterPro" id="IPR020603">
    <property type="entry name" value="MraZ_dom"/>
</dbReference>
<dbReference type="InterPro" id="IPR035642">
    <property type="entry name" value="MraZ_N"/>
</dbReference>
<dbReference type="InterPro" id="IPR038619">
    <property type="entry name" value="MraZ_sf"/>
</dbReference>
<dbReference type="InterPro" id="IPR007159">
    <property type="entry name" value="SpoVT-AbrB_dom"/>
</dbReference>
<dbReference type="InterPro" id="IPR037914">
    <property type="entry name" value="SpoVT-AbrB_sf"/>
</dbReference>
<dbReference type="NCBIfam" id="TIGR00242">
    <property type="entry name" value="division/cell wall cluster transcriptional repressor MraZ"/>
    <property type="match status" value="1"/>
</dbReference>
<dbReference type="PANTHER" id="PTHR34701">
    <property type="entry name" value="TRANSCRIPTIONAL REGULATOR MRAZ"/>
    <property type="match status" value="1"/>
</dbReference>
<dbReference type="PANTHER" id="PTHR34701:SF1">
    <property type="entry name" value="TRANSCRIPTIONAL REGULATOR MRAZ"/>
    <property type="match status" value="1"/>
</dbReference>
<dbReference type="Pfam" id="PF02381">
    <property type="entry name" value="MraZ"/>
    <property type="match status" value="2"/>
</dbReference>
<dbReference type="SUPFAM" id="SSF89447">
    <property type="entry name" value="AbrB/MazE/MraZ-like"/>
    <property type="match status" value="1"/>
</dbReference>
<dbReference type="PROSITE" id="PS51740">
    <property type="entry name" value="SPOVT_ABRB"/>
    <property type="match status" value="2"/>
</dbReference>
<organism>
    <name type="scientific">Desulfosudis oleivorans (strain DSM 6200 / JCM 39069 / Hxd3)</name>
    <name type="common">Desulfococcus oleovorans</name>
    <dbReference type="NCBI Taxonomy" id="96561"/>
    <lineage>
        <taxon>Bacteria</taxon>
        <taxon>Pseudomonadati</taxon>
        <taxon>Thermodesulfobacteriota</taxon>
        <taxon>Desulfobacteria</taxon>
        <taxon>Desulfobacterales</taxon>
        <taxon>Desulfosudaceae</taxon>
        <taxon>Desulfosudis</taxon>
    </lineage>
</organism>
<name>MRAZ_DESOH</name>
<gene>
    <name evidence="1" type="primary">mraZ</name>
    <name type="ordered locus">Dole_2796</name>
</gene>
<accession>A8ZXX2</accession>
<protein>
    <recommendedName>
        <fullName>Transcriptional regulator MraZ</fullName>
    </recommendedName>
</protein>
<reference key="1">
    <citation type="submission" date="2007-10" db="EMBL/GenBank/DDBJ databases">
        <title>Complete sequence of Desulfococcus oleovorans Hxd3.</title>
        <authorList>
            <consortium name="US DOE Joint Genome Institute"/>
            <person name="Copeland A."/>
            <person name="Lucas S."/>
            <person name="Lapidus A."/>
            <person name="Barry K."/>
            <person name="Glavina del Rio T."/>
            <person name="Dalin E."/>
            <person name="Tice H."/>
            <person name="Pitluck S."/>
            <person name="Kiss H."/>
            <person name="Brettin T."/>
            <person name="Bruce D."/>
            <person name="Detter J.C."/>
            <person name="Han C."/>
            <person name="Schmutz J."/>
            <person name="Larimer F."/>
            <person name="Land M."/>
            <person name="Hauser L."/>
            <person name="Kyrpides N."/>
            <person name="Kim E."/>
            <person name="Wawrik B."/>
            <person name="Richardson P."/>
        </authorList>
    </citation>
    <scope>NUCLEOTIDE SEQUENCE [LARGE SCALE GENOMIC DNA]</scope>
    <source>
        <strain>DSM 6200 / JCM 39069 / Hxd3</strain>
    </source>
</reference>
<proteinExistence type="inferred from homology"/>
<feature type="chain" id="PRO_1000148852" description="Transcriptional regulator MraZ">
    <location>
        <begin position="1"/>
        <end position="146"/>
    </location>
</feature>
<feature type="domain" description="SpoVT-AbrB 1" evidence="2">
    <location>
        <begin position="5"/>
        <end position="48"/>
    </location>
</feature>
<feature type="domain" description="SpoVT-AbrB 2" evidence="2">
    <location>
        <begin position="77"/>
        <end position="120"/>
    </location>
</feature>
<evidence type="ECO:0000255" key="1">
    <source>
        <dbReference type="HAMAP-Rule" id="MF_01008"/>
    </source>
</evidence>
<evidence type="ECO:0000255" key="2">
    <source>
        <dbReference type="PROSITE-ProRule" id="PRU01076"/>
    </source>
</evidence>
<sequence>MFRGTSYHRIDPKGRIVIPSRFRDLIGADGTAMITFFEGGLYAYTLEEWSKIEAKMVMLEKKGNQMRRFRRFFIGRASECQPDKQWRLLIPPELRQDAGLEEEIVLIGISDHFEIWSRAKWEEQKNLHEDDMNDEDFQNEIEKLGL</sequence>
<keyword id="KW-0963">Cytoplasm</keyword>
<keyword id="KW-0238">DNA-binding</keyword>
<keyword id="KW-1185">Reference proteome</keyword>
<keyword id="KW-0677">Repeat</keyword>
<keyword id="KW-0804">Transcription</keyword>
<keyword id="KW-0805">Transcription regulation</keyword>
<comment type="subunit">
    <text evidence="1">Forms oligomers.</text>
</comment>
<comment type="subcellular location">
    <subcellularLocation>
        <location evidence="1">Cytoplasm</location>
        <location evidence="1">Nucleoid</location>
    </subcellularLocation>
</comment>
<comment type="similarity">
    <text evidence="1">Belongs to the MraZ family.</text>
</comment>